<name>FARS_ZEAMM</name>
<keyword id="KW-0963">Cytoplasm</keyword>
<keyword id="KW-0456">Lyase</keyword>
<keyword id="KW-0460">Magnesium</keyword>
<keyword id="KW-0464">Manganese</keyword>
<keyword id="KW-0479">Metal-binding</keyword>
<keyword id="KW-0611">Plant defense</keyword>
<proteinExistence type="evidence at protein level"/>
<protein>
    <recommendedName>
        <fullName>(E)-beta-farnesene synthase</fullName>
        <ecNumber>4.2.3.47</ecNumber>
    </recommendedName>
    <alternativeName>
        <fullName>Terpene synthase 10</fullName>
    </alternativeName>
</protein>
<evidence type="ECO:0000250" key="1"/>
<evidence type="ECO:0000250" key="2">
    <source>
        <dbReference type="UniProtKB" id="Q40577"/>
    </source>
</evidence>
<evidence type="ECO:0000269" key="3">
    <source>
    </source>
</evidence>
<evidence type="ECO:0000305" key="4"/>
<dbReference type="EC" id="4.2.3.47"/>
<dbReference type="EMBL" id="GQ253104">
    <property type="protein sequence ID" value="ACT37403.1"/>
    <property type="molecule type" value="mRNA"/>
</dbReference>
<dbReference type="SMR" id="C7E5V7"/>
<dbReference type="BRENDA" id="4.2.3.47">
    <property type="organism ID" value="6752"/>
</dbReference>
<dbReference type="UniPathway" id="UPA00213"/>
<dbReference type="GO" id="GO:0005737">
    <property type="term" value="C:cytoplasm"/>
    <property type="evidence" value="ECO:0007669"/>
    <property type="project" value="UniProtKB-SubCell"/>
</dbReference>
<dbReference type="GO" id="GO:0000287">
    <property type="term" value="F:magnesium ion binding"/>
    <property type="evidence" value="ECO:0007669"/>
    <property type="project" value="InterPro"/>
</dbReference>
<dbReference type="GO" id="GO:0010333">
    <property type="term" value="F:terpene synthase activity"/>
    <property type="evidence" value="ECO:0007669"/>
    <property type="project" value="InterPro"/>
</dbReference>
<dbReference type="GO" id="GO:0006952">
    <property type="term" value="P:defense response"/>
    <property type="evidence" value="ECO:0007669"/>
    <property type="project" value="UniProtKB-KW"/>
</dbReference>
<dbReference type="GO" id="GO:0016102">
    <property type="term" value="P:diterpenoid biosynthetic process"/>
    <property type="evidence" value="ECO:0007669"/>
    <property type="project" value="InterPro"/>
</dbReference>
<dbReference type="CDD" id="cd00684">
    <property type="entry name" value="Terpene_cyclase_plant_C1"/>
    <property type="match status" value="1"/>
</dbReference>
<dbReference type="FunFam" id="1.10.600.10:FF:000007">
    <property type="entry name" value="Isoprene synthase, chloroplastic"/>
    <property type="match status" value="1"/>
</dbReference>
<dbReference type="Gene3D" id="1.10.600.10">
    <property type="entry name" value="Farnesyl Diphosphate Synthase"/>
    <property type="match status" value="1"/>
</dbReference>
<dbReference type="Gene3D" id="1.50.10.130">
    <property type="entry name" value="Terpene synthase, N-terminal domain"/>
    <property type="match status" value="1"/>
</dbReference>
<dbReference type="InterPro" id="IPR008949">
    <property type="entry name" value="Isoprenoid_synthase_dom_sf"/>
</dbReference>
<dbReference type="InterPro" id="IPR034741">
    <property type="entry name" value="Terpene_cyclase-like_1_C"/>
</dbReference>
<dbReference type="InterPro" id="IPR044814">
    <property type="entry name" value="Terpene_cyclase_plant_C1"/>
</dbReference>
<dbReference type="InterPro" id="IPR001906">
    <property type="entry name" value="Terpene_synth_N"/>
</dbReference>
<dbReference type="InterPro" id="IPR036965">
    <property type="entry name" value="Terpene_synth_N_sf"/>
</dbReference>
<dbReference type="InterPro" id="IPR050148">
    <property type="entry name" value="Terpene_synthase-like"/>
</dbReference>
<dbReference type="InterPro" id="IPR005630">
    <property type="entry name" value="Terpene_synthase_metal-bd"/>
</dbReference>
<dbReference type="InterPro" id="IPR008930">
    <property type="entry name" value="Terpenoid_cyclase/PrenylTrfase"/>
</dbReference>
<dbReference type="PANTHER" id="PTHR31225:SF118">
    <property type="entry name" value="(E)-BETA-FARNESENE SYNTHASE"/>
    <property type="match status" value="1"/>
</dbReference>
<dbReference type="PANTHER" id="PTHR31225">
    <property type="entry name" value="OS04G0344100 PROTEIN-RELATED"/>
    <property type="match status" value="1"/>
</dbReference>
<dbReference type="Pfam" id="PF01397">
    <property type="entry name" value="Terpene_synth"/>
    <property type="match status" value="1"/>
</dbReference>
<dbReference type="Pfam" id="PF03936">
    <property type="entry name" value="Terpene_synth_C"/>
    <property type="match status" value="1"/>
</dbReference>
<dbReference type="SFLD" id="SFLDS00005">
    <property type="entry name" value="Isoprenoid_Synthase_Type_I"/>
    <property type="match status" value="1"/>
</dbReference>
<dbReference type="SFLD" id="SFLDG01019">
    <property type="entry name" value="Terpene_Cyclase_Like_1_C_Termi"/>
    <property type="match status" value="1"/>
</dbReference>
<dbReference type="SUPFAM" id="SSF48239">
    <property type="entry name" value="Terpenoid cyclases/Protein prenyltransferases"/>
    <property type="match status" value="1"/>
</dbReference>
<dbReference type="SUPFAM" id="SSF48576">
    <property type="entry name" value="Terpenoid synthases"/>
    <property type="match status" value="1"/>
</dbReference>
<accession>C7E5V7</accession>
<reference key="1">
    <citation type="journal article" date="2009" name="Phytochemistry">
        <title>Molecular and biochemical evolution of maize terpene synthase 10, an enzyme of indirect defense.</title>
        <authorList>
            <person name="Koellner T.G."/>
            <person name="Gershenzon J."/>
            <person name="Degenhardt J."/>
        </authorList>
    </citation>
    <scope>NUCLEOTIDE SEQUENCE [MRNA]</scope>
    <scope>FUNCTION</scope>
    <scope>CATALYTIC ACTIVITY</scope>
</reference>
<organism>
    <name type="scientific">Zea mays subsp. mexicana</name>
    <name type="common">Mexican teosinte</name>
    <dbReference type="NCBI Taxonomy" id="4579"/>
    <lineage>
        <taxon>Eukaryota</taxon>
        <taxon>Viridiplantae</taxon>
        <taxon>Streptophyta</taxon>
        <taxon>Embryophyta</taxon>
        <taxon>Tracheophyta</taxon>
        <taxon>Spermatophyta</taxon>
        <taxon>Magnoliopsida</taxon>
        <taxon>Liliopsida</taxon>
        <taxon>Poales</taxon>
        <taxon>Poaceae</taxon>
        <taxon>PACMAD clade</taxon>
        <taxon>Panicoideae</taxon>
        <taxon>Andropogonodae</taxon>
        <taxon>Andropogoneae</taxon>
        <taxon>Tripsacinae</taxon>
        <taxon>Zea</taxon>
    </lineage>
</organism>
<feature type="chain" id="PRO_0000402130" description="(E)-beta-farnesene synthase">
    <location>
        <begin position="1"/>
        <end position="534"/>
    </location>
</feature>
<feature type="short sequence motif" description="DDXXD motif">
    <location>
        <begin position="287"/>
        <end position="291"/>
    </location>
</feature>
<feature type="binding site" evidence="2">
    <location>
        <position position="287"/>
    </location>
    <ligand>
        <name>Mg(2+)</name>
        <dbReference type="ChEBI" id="CHEBI:18420"/>
        <label>1</label>
    </ligand>
</feature>
<feature type="binding site" evidence="2">
    <location>
        <position position="287"/>
    </location>
    <ligand>
        <name>Mg(2+)</name>
        <dbReference type="ChEBI" id="CHEBI:18420"/>
        <label>2</label>
    </ligand>
</feature>
<feature type="binding site" evidence="2">
    <location>
        <position position="291"/>
    </location>
    <ligand>
        <name>Mg(2+)</name>
        <dbReference type="ChEBI" id="CHEBI:18420"/>
        <label>1</label>
    </ligand>
</feature>
<feature type="binding site" evidence="2">
    <location>
        <position position="291"/>
    </location>
    <ligand>
        <name>Mg(2+)</name>
        <dbReference type="ChEBI" id="CHEBI:18420"/>
        <label>2</label>
    </ligand>
</feature>
<feature type="binding site" evidence="2">
    <location>
        <position position="431"/>
    </location>
    <ligand>
        <name>Mg(2+)</name>
        <dbReference type="ChEBI" id="CHEBI:18420"/>
        <label>3</label>
    </ligand>
</feature>
<feature type="binding site" evidence="2">
    <location>
        <position position="435"/>
    </location>
    <ligand>
        <name>Mg(2+)</name>
        <dbReference type="ChEBI" id="CHEBI:18420"/>
        <label>3</label>
    </ligand>
</feature>
<feature type="binding site" evidence="2">
    <location>
        <position position="439"/>
    </location>
    <ligand>
        <name>Mg(2+)</name>
        <dbReference type="ChEBI" id="CHEBI:18420"/>
        <label>3</label>
    </ligand>
</feature>
<sequence length="534" mass="61363">MDATAFHPSLWGDFFVKYKPPTAPKRGHMTERAELLKEEVRKTLKAAANQIKNALDLIITLQRLGLDHHYENEISELLRFVYSSSDYDDKDLYVVSLRFYLLRKHGHCVSSDVFTSFKDEEGNFVVDDTKCLLTLYNAAYLRTHGEKVLDEAITFTRRQLEASLLDPLEPALLADEVSLTLQTPLFRRLRILEAINYIPIYGKEAGRNEAILELAKLNFNLAQLIYCEELKEVTLWWKQLNVETNLSFIRDRIVECHFWMTGACCEPQYSLSRVIATKMTALITVLDDMMDTYSTTEEAMLLAEAIYGWEENAAELLPGYMKDFYLYLLKTIDSCGDELGPNRSFRTFYLKEMLKVLVRGSSQEIKWRNENYVPKTISEHLEHSGPSVGAFQVACSSFVGMGDSITKGSFEWLLTYPELAKSLMNIARLLNDTASTKREQNAGHHVSTVQCYMLMHGTTMDEACEKIKELTEDSWKDMMELYLTPTEHPKLIAQTIVDFARTADYMYKETDGFTFSHTIKDMIAKLFVDPISLF</sequence>
<comment type="function">
    <text evidence="3">Sesquiterpene cyclase catalyzing the production of beta-farnesene and alpha-bergamotene in equal amounts from farnesyl diphosphate. Involved in indirect defense by producing volatile signals attracting natural enemies of herbivores.</text>
</comment>
<comment type="catalytic activity">
    <reaction evidence="3">
        <text>(2E,6E)-farnesyl diphosphate = (E)-beta-farnesene + diphosphate</text>
        <dbReference type="Rhea" id="RHEA:27425"/>
        <dbReference type="ChEBI" id="CHEBI:10418"/>
        <dbReference type="ChEBI" id="CHEBI:33019"/>
        <dbReference type="ChEBI" id="CHEBI:175763"/>
        <dbReference type="EC" id="4.2.3.47"/>
    </reaction>
</comment>
<comment type="cofactor">
    <cofactor evidence="1">
        <name>Mg(2+)</name>
        <dbReference type="ChEBI" id="CHEBI:18420"/>
    </cofactor>
    <cofactor evidence="1">
        <name>Co(2+)</name>
        <dbReference type="ChEBI" id="CHEBI:48828"/>
    </cofactor>
    <cofactor evidence="1">
        <name>Mn(2+)</name>
        <dbReference type="ChEBI" id="CHEBI:29035"/>
    </cofactor>
</comment>
<comment type="pathway">
    <text>Secondary metabolite biosynthesis; terpenoid biosynthesis.</text>
</comment>
<comment type="subcellular location">
    <subcellularLocation>
        <location evidence="4">Cytoplasm</location>
    </subcellularLocation>
</comment>
<comment type="domain">
    <text>The Asp-Asp-Xaa-Xaa-Asp/Glu (DDXXD/E) motif is important for the catalytic activity, presumably through binding to Mg(2+).</text>
</comment>
<comment type="similarity">
    <text evidence="4">Belongs to the terpene synthase family.</text>
</comment>